<evidence type="ECO:0000250" key="1">
    <source>
        <dbReference type="UniProtKB" id="Q64375"/>
    </source>
</evidence>
<evidence type="ECO:0000250" key="2">
    <source>
        <dbReference type="UniProtKB" id="Q8K2B0"/>
    </source>
</evidence>
<evidence type="ECO:0000255" key="3"/>
<evidence type="ECO:0000256" key="4">
    <source>
        <dbReference type="SAM" id="MobiDB-lite"/>
    </source>
</evidence>
<evidence type="ECO:0000269" key="5">
    <source>
    </source>
</evidence>
<evidence type="ECO:0000269" key="6">
    <source>
    </source>
</evidence>
<evidence type="ECO:0000269" key="7">
    <source>
    </source>
</evidence>
<evidence type="ECO:0000269" key="8">
    <source ref="3"/>
</evidence>
<evidence type="ECO:0000303" key="9">
    <source>
    </source>
</evidence>
<evidence type="ECO:0000303" key="10">
    <source>
    </source>
</evidence>
<evidence type="ECO:0000303" key="11">
    <source>
    </source>
</evidence>
<evidence type="ECO:0000305" key="12"/>
<evidence type="ECO:0000312" key="13">
    <source>
        <dbReference type="HGNC" id="HGNC:16946"/>
    </source>
</evidence>
<reference key="1">
    <citation type="journal article" date="1996" name="Mol. Biol. Cell">
        <title>cDNA cloning and characterization of a novel nucleolar protein.</title>
        <authorList>
            <person name="Ochs R.L."/>
            <person name="Stein T.W. Jr."/>
            <person name="Chan E.K.L."/>
            <person name="Ruutu M."/>
            <person name="Tan E.M."/>
        </authorList>
    </citation>
    <scope>NUCLEOTIDE SEQUENCE [MRNA]</scope>
    <scope>SUBCELLULAR LOCATION</scope>
    <source>
        <tissue>Urinary bladder urothelium</tissue>
    </source>
</reference>
<reference key="2">
    <citation type="journal article" date="2000" name="Br. J. Cancer">
        <title>Identification of nucleolar protein No55 as a tumour-associated autoantigen in patients with prostate cancer.</title>
        <authorList>
            <person name="Fossa A."/>
            <person name="Siebert R."/>
            <person name="Aasheim H.-C."/>
            <person name="Maelandsmo G.M."/>
            <person name="Berner A."/>
            <person name="Fossa S.D."/>
            <person name="Paus E."/>
            <person name="Smeland E.B."/>
            <person name="Gaudernack G."/>
        </authorList>
    </citation>
    <scope>NUCLEOTIDE SEQUENCE [MRNA]</scope>
    <scope>TISSUE SPECIFICITY</scope>
    <scope>VARIANT ARG-186</scope>
</reference>
<reference key="3">
    <citation type="submission" date="2005-04" db="EMBL/GenBank/DDBJ databases">
        <authorList>
            <person name="Suzuki Y."/>
            <person name="Sugano S."/>
            <person name="Totoki Y."/>
            <person name="Toyoda A."/>
            <person name="Takeda T."/>
            <person name="Sakaki Y."/>
            <person name="Tanaka A."/>
            <person name="Yokoyama S."/>
        </authorList>
    </citation>
    <scope>NUCLEOTIDE SEQUENCE [LARGE SCALE MRNA]</scope>
    <scope>VARIANT ARG-186</scope>
    <source>
        <tissue>Kidney</tissue>
    </source>
</reference>
<reference key="4">
    <citation type="journal article" date="2004" name="Genome Res.">
        <title>The status, quality, and expansion of the NIH full-length cDNA project: the Mammalian Gene Collection (MGC).</title>
        <authorList>
            <consortium name="The MGC Project Team"/>
        </authorList>
    </citation>
    <scope>NUCLEOTIDE SEQUENCE [LARGE SCALE MRNA]</scope>
    <source>
        <tissue>Brain</tissue>
    </source>
</reference>
<reference key="5">
    <citation type="submission" date="2008-02" db="UniProtKB">
        <authorList>
            <person name="Bienvenut W.V."/>
            <person name="Dhillon A.S."/>
            <person name="Kolch W."/>
        </authorList>
    </citation>
    <scope>PROTEIN SEQUENCE OF 58-64; 122-133; 161-171; 214-221; 230-240 AND 315-337</scope>
    <scope>IDENTIFICATION BY MASS SPECTROMETRY</scope>
    <source>
        <tissue>Hepatoma</tissue>
    </source>
</reference>
<reference key="6">
    <citation type="journal article" date="2011" name="BMC Syst. Biol.">
        <title>Initial characterization of the human central proteome.</title>
        <authorList>
            <person name="Burkard T.R."/>
            <person name="Planyavsky M."/>
            <person name="Kaupe I."/>
            <person name="Breitwieser F.P."/>
            <person name="Buerckstuemmer T."/>
            <person name="Bennett K.L."/>
            <person name="Superti-Furga G."/>
            <person name="Colinge J."/>
        </authorList>
    </citation>
    <scope>IDENTIFICATION BY MASS SPECTROMETRY [LARGE SCALE ANALYSIS]</scope>
</reference>
<reference key="7">
    <citation type="journal article" date="2014" name="J. Bone Miner. Res.">
        <title>Sc65 is a novel endoplasmic reticulum protein that regulates bone mass homeostasis.</title>
        <authorList>
            <person name="Gruenwald K."/>
            <person name="Castagnola P."/>
            <person name="Besio R."/>
            <person name="Dimori M."/>
            <person name="Chen Y."/>
            <person name="Akel N.S."/>
            <person name="Swain F.L."/>
            <person name="Skinner R.A."/>
            <person name="Eyre D.R."/>
            <person name="Gaddy D."/>
            <person name="Suva L.J."/>
            <person name="Morello R."/>
        </authorList>
    </citation>
    <scope>SUBCELLULAR LOCATION</scope>
    <scope>TISSUE SPECIFICITY</scope>
</reference>
<protein>
    <recommendedName>
        <fullName evidence="10">Endoplasmic reticulum protein SC65</fullName>
    </recommendedName>
    <alternativeName>
        <fullName>Leprecan-like protein 4</fullName>
    </alternativeName>
    <alternativeName>
        <fullName evidence="9 11">Nucleolar autoantigen No55</fullName>
    </alternativeName>
    <alternativeName>
        <fullName evidence="13">Prolyl 3-hydroxylase family member 4</fullName>
    </alternativeName>
    <alternativeName>
        <fullName evidence="1">Synaptonemal complex protein SC65</fullName>
    </alternativeName>
</protein>
<name>SC65_HUMAN</name>
<comment type="function">
    <text evidence="2">Part of a complex composed of PLOD1, P3H3 and P3H4 that catalyzes hydroxylation of lysine residues in collagen alpha chains and is required for normal assembly and cross-linking of collagen fibrils. Required for normal bone density and normal skin stability via its role in hydroxylation of lysine residues in collagen alpha chains and in collagen fibril assembly.</text>
</comment>
<comment type="subunit">
    <text evidence="2">Interacts with PLOD1, P3H3 and PPIB. Identified in a complex with PLOD1 and P3H3.</text>
</comment>
<comment type="subcellular location">
    <subcellularLocation>
        <location evidence="6">Endoplasmic reticulum</location>
    </subcellularLocation>
</comment>
<comment type="tissue specificity">
    <text evidence="5 6">Detected in fibroblasts (at protein level) (PubMed:23959653). Detected in spleen, prostate, testis, ovary, colon, pancreas, kidney, placenta and heart (PubMed:10952778).</text>
</comment>
<comment type="similarity">
    <text evidence="12">Belongs to the leprecan family.</text>
</comment>
<comment type="caution">
    <text evidence="6 7">Was originally identified in the nucleolus (PubMed:8862517). A recent publication found it only in the endoplasmic reticulum, which agrees with its biological function and the predicted signal sequence (PubMed:23959653).</text>
</comment>
<sequence>MARVAWGLLWLLLGSAGAQYEKYSFRGFPPEDLMPLAAAYGHALEQYEGESWRESARYLEAALRLHRLLRDSEAFCHANCSGPAPAAKPDPDGGRADEWACELRLFGRVLERAACLRRCKRTLPAFQVPYPPRQLLRDFQSRLPYQYLHYALFKANRLEKAVAAAYTFLQRNPKHELTAKYLNYYQGMLDVADESLTDLEAQPYEAVFLRAVKLYNSGDFRSSTEDMERALSEYLAVFARCLAGCEGAHEQVDFKDFYPAIADLFAESLQCKVDCEANLTPNVGGYFVDKFVATMYHYLQFAYYKLNDVRQAARSAASYMLFDPKDSVMQQNLVYYRFHRARWGLEEEDFQPREEAMLYHNQTAELRELLEFTHMYLQSDDEMELEETEPPLEPEDALSDAEFEGEGDYEEGMYADWWQEPDAKGDEAEAEPEPELA</sequence>
<gene>
    <name evidence="13" type="primary">P3H4</name>
    <name type="synonym">LEPREL4</name>
    <name type="synonym">NOL55</name>
    <name evidence="1" type="synonym">SC65</name>
</gene>
<keyword id="KW-0903">Direct protein sequencing</keyword>
<keyword id="KW-0256">Endoplasmic reticulum</keyword>
<keyword id="KW-0325">Glycoprotein</keyword>
<keyword id="KW-1267">Proteomics identification</keyword>
<keyword id="KW-1185">Reference proteome</keyword>
<keyword id="KW-0732">Signal</keyword>
<organism>
    <name type="scientific">Homo sapiens</name>
    <name type="common">Human</name>
    <dbReference type="NCBI Taxonomy" id="9606"/>
    <lineage>
        <taxon>Eukaryota</taxon>
        <taxon>Metazoa</taxon>
        <taxon>Chordata</taxon>
        <taxon>Craniata</taxon>
        <taxon>Vertebrata</taxon>
        <taxon>Euteleostomi</taxon>
        <taxon>Mammalia</taxon>
        <taxon>Eutheria</taxon>
        <taxon>Euarchontoglires</taxon>
        <taxon>Primates</taxon>
        <taxon>Haplorrhini</taxon>
        <taxon>Catarrhini</taxon>
        <taxon>Hominidae</taxon>
        <taxon>Homo</taxon>
    </lineage>
</organism>
<accession>Q92791</accession>
<accession>Q53GI6</accession>
<accession>Q9H4F6</accession>
<proteinExistence type="evidence at protein level"/>
<dbReference type="EMBL" id="U47621">
    <property type="protein sequence ID" value="AAC51792.1"/>
    <property type="molecule type" value="mRNA"/>
</dbReference>
<dbReference type="EMBL" id="AJ250583">
    <property type="protein sequence ID" value="CAC16786.1"/>
    <property type="molecule type" value="mRNA"/>
</dbReference>
<dbReference type="EMBL" id="AK222945">
    <property type="protein sequence ID" value="BAD96665.1"/>
    <property type="molecule type" value="mRNA"/>
</dbReference>
<dbReference type="EMBL" id="BC001047">
    <property type="protein sequence ID" value="AAH01047.1"/>
    <property type="molecule type" value="mRNA"/>
</dbReference>
<dbReference type="EMBL" id="BC007942">
    <property type="protein sequence ID" value="AAH07942.1"/>
    <property type="molecule type" value="mRNA"/>
</dbReference>
<dbReference type="EMBL" id="BC011701">
    <property type="protein sequence ID" value="AAH11701.1"/>
    <property type="molecule type" value="mRNA"/>
</dbReference>
<dbReference type="CCDS" id="CCDS11408.1"/>
<dbReference type="RefSeq" id="NP_006446.1">
    <property type="nucleotide sequence ID" value="NM_006455.3"/>
</dbReference>
<dbReference type="SMR" id="Q92791"/>
<dbReference type="BioGRID" id="115855">
    <property type="interactions" value="214"/>
</dbReference>
<dbReference type="FunCoup" id="Q92791">
    <property type="interactions" value="395"/>
</dbReference>
<dbReference type="IntAct" id="Q92791">
    <property type="interactions" value="51"/>
</dbReference>
<dbReference type="STRING" id="9606.ENSP00000347649"/>
<dbReference type="GlyConnect" id="1782">
    <property type="glycosylation" value="2 N-Linked glycans (1 site)"/>
</dbReference>
<dbReference type="GlyCosmos" id="Q92791">
    <property type="glycosylation" value="1 site, 2 glycans"/>
</dbReference>
<dbReference type="GlyGen" id="Q92791">
    <property type="glycosylation" value="3 sites, 12 N-linked glycans (2 sites), 1 O-linked glycan (1 site)"/>
</dbReference>
<dbReference type="iPTMnet" id="Q92791"/>
<dbReference type="PhosphoSitePlus" id="Q92791"/>
<dbReference type="BioMuta" id="P3H4"/>
<dbReference type="DMDM" id="3183090"/>
<dbReference type="jPOST" id="Q92791"/>
<dbReference type="MassIVE" id="Q92791"/>
<dbReference type="PaxDb" id="9606-ENSP00000347649"/>
<dbReference type="PeptideAtlas" id="Q92791"/>
<dbReference type="ProteomicsDB" id="75471"/>
<dbReference type="Pumba" id="Q92791"/>
<dbReference type="Antibodypedia" id="28941">
    <property type="antibodies" value="131 antibodies from 23 providers"/>
</dbReference>
<dbReference type="DNASU" id="10609"/>
<dbReference type="Ensembl" id="ENST00000355468.7">
    <property type="protein sequence ID" value="ENSP00000347649.2"/>
    <property type="gene ID" value="ENSG00000141696.13"/>
</dbReference>
<dbReference type="Ensembl" id="ENST00000393928.6">
    <property type="protein sequence ID" value="ENSP00000377505.1"/>
    <property type="gene ID" value="ENSG00000141696.13"/>
</dbReference>
<dbReference type="GeneID" id="10609"/>
<dbReference type="KEGG" id="hsa:10609"/>
<dbReference type="MANE-Select" id="ENST00000393928.6">
    <property type="protein sequence ID" value="ENSP00000377505.1"/>
    <property type="RefSeq nucleotide sequence ID" value="NM_006455.3"/>
    <property type="RefSeq protein sequence ID" value="NP_006446.1"/>
</dbReference>
<dbReference type="UCSC" id="uc002hxt.4">
    <property type="organism name" value="human"/>
</dbReference>
<dbReference type="AGR" id="HGNC:16946"/>
<dbReference type="CTD" id="10609"/>
<dbReference type="DisGeNET" id="10609"/>
<dbReference type="GeneCards" id="P3H4"/>
<dbReference type="HGNC" id="HGNC:16946">
    <property type="gene designation" value="P3H4"/>
</dbReference>
<dbReference type="HPA" id="ENSG00000141696">
    <property type="expression patterns" value="Low tissue specificity"/>
</dbReference>
<dbReference type="MIM" id="617419">
    <property type="type" value="gene"/>
</dbReference>
<dbReference type="neXtProt" id="NX_Q92791"/>
<dbReference type="OpenTargets" id="ENSG00000141696"/>
<dbReference type="VEuPathDB" id="HostDB:ENSG00000141696"/>
<dbReference type="eggNOG" id="KOG4459">
    <property type="taxonomic scope" value="Eukaryota"/>
</dbReference>
<dbReference type="GeneTree" id="ENSGT00940000153814"/>
<dbReference type="HOGENOM" id="CLU_029887_0_0_1"/>
<dbReference type="InParanoid" id="Q92791"/>
<dbReference type="OMA" id="EAFCGRN"/>
<dbReference type="OrthoDB" id="8610171at2759"/>
<dbReference type="PAN-GO" id="Q92791">
    <property type="GO annotations" value="4 GO annotations based on evolutionary models"/>
</dbReference>
<dbReference type="PhylomeDB" id="Q92791"/>
<dbReference type="TreeFam" id="TF320837"/>
<dbReference type="PathwayCommons" id="Q92791"/>
<dbReference type="SignaLink" id="Q92791"/>
<dbReference type="BioGRID-ORCS" id="10609">
    <property type="hits" value="31 hits in 1151 CRISPR screens"/>
</dbReference>
<dbReference type="ChiTaRS" id="P3H4">
    <property type="organism name" value="human"/>
</dbReference>
<dbReference type="GeneWiki" id="SC65"/>
<dbReference type="GenomeRNAi" id="10609"/>
<dbReference type="Pharos" id="Q92791">
    <property type="development level" value="Tbio"/>
</dbReference>
<dbReference type="PRO" id="PR:Q92791"/>
<dbReference type="Proteomes" id="UP000005640">
    <property type="component" value="Chromosome 17"/>
</dbReference>
<dbReference type="RNAct" id="Q92791">
    <property type="molecule type" value="protein"/>
</dbReference>
<dbReference type="Bgee" id="ENSG00000141696">
    <property type="expression patterns" value="Expressed in stromal cell of endometrium and 153 other cell types or tissues"/>
</dbReference>
<dbReference type="ExpressionAtlas" id="Q92791">
    <property type="expression patterns" value="baseline and differential"/>
</dbReference>
<dbReference type="GO" id="GO:1902494">
    <property type="term" value="C:catalytic complex"/>
    <property type="evidence" value="ECO:0007669"/>
    <property type="project" value="Ensembl"/>
</dbReference>
<dbReference type="GO" id="GO:0000794">
    <property type="term" value="C:condensed nuclear chromosome"/>
    <property type="evidence" value="ECO:0000304"/>
    <property type="project" value="ProtInc"/>
</dbReference>
<dbReference type="GO" id="GO:0005783">
    <property type="term" value="C:endoplasmic reticulum"/>
    <property type="evidence" value="ECO:0000314"/>
    <property type="project" value="UniProtKB"/>
</dbReference>
<dbReference type="GO" id="GO:0043231">
    <property type="term" value="C:intracellular membrane-bounded organelle"/>
    <property type="evidence" value="ECO:0000314"/>
    <property type="project" value="HPA"/>
</dbReference>
<dbReference type="GO" id="GO:0005730">
    <property type="term" value="C:nucleolus"/>
    <property type="evidence" value="ECO:0000304"/>
    <property type="project" value="ProtInc"/>
</dbReference>
<dbReference type="GO" id="GO:0000795">
    <property type="term" value="C:synaptonemal complex"/>
    <property type="evidence" value="ECO:0000304"/>
    <property type="project" value="ProtInc"/>
</dbReference>
<dbReference type="GO" id="GO:0046849">
    <property type="term" value="P:bone remodeling"/>
    <property type="evidence" value="ECO:0000250"/>
    <property type="project" value="UniProtKB"/>
</dbReference>
<dbReference type="GO" id="GO:0032964">
    <property type="term" value="P:collagen biosynthetic process"/>
    <property type="evidence" value="ECO:0000250"/>
    <property type="project" value="UniProtKB"/>
</dbReference>
<dbReference type="GO" id="GO:0030199">
    <property type="term" value="P:collagen fibril organization"/>
    <property type="evidence" value="ECO:0000250"/>
    <property type="project" value="UniProtKB"/>
</dbReference>
<dbReference type="GO" id="GO:0017185">
    <property type="term" value="P:peptidyl-lysine hydroxylation"/>
    <property type="evidence" value="ECO:0000250"/>
    <property type="project" value="UniProtKB"/>
</dbReference>
<dbReference type="GO" id="GO:0007130">
    <property type="term" value="P:synaptonemal complex assembly"/>
    <property type="evidence" value="ECO:0000304"/>
    <property type="project" value="ProtInc"/>
</dbReference>
<dbReference type="FunFam" id="1.25.40.10:FF:000119">
    <property type="entry name" value="synaptonemal complex protein SC65"/>
    <property type="match status" value="1"/>
</dbReference>
<dbReference type="Gene3D" id="1.25.40.10">
    <property type="entry name" value="Tetratricopeptide repeat domain"/>
    <property type="match status" value="2"/>
</dbReference>
<dbReference type="InterPro" id="IPR052284">
    <property type="entry name" value="Collagen_mod_leprecan"/>
</dbReference>
<dbReference type="InterPro" id="IPR056585">
    <property type="entry name" value="Leprecan_dom"/>
</dbReference>
<dbReference type="InterPro" id="IPR011990">
    <property type="entry name" value="TPR-like_helical_dom_sf"/>
</dbReference>
<dbReference type="PANTHER" id="PTHR13986:SF4">
    <property type="entry name" value="ENDOPLASMIC RETICULUM PROTEIN SC65"/>
    <property type="match status" value="1"/>
</dbReference>
<dbReference type="PANTHER" id="PTHR13986">
    <property type="entry name" value="PROTEIN LYSINE HYDROXYLATION COMPLEX COMPONENT"/>
    <property type="match status" value="1"/>
</dbReference>
<dbReference type="Pfam" id="PF23557">
    <property type="entry name" value="TPR_leprecan"/>
    <property type="match status" value="1"/>
</dbReference>
<feature type="signal peptide" evidence="3">
    <location>
        <begin position="1"/>
        <end position="18"/>
    </location>
</feature>
<feature type="chain" id="PRO_0000150367" description="Endoplasmic reticulum protein SC65" evidence="3">
    <location>
        <begin position="19"/>
        <end position="437"/>
    </location>
</feature>
<feature type="region of interest" description="Disordered" evidence="4">
    <location>
        <begin position="381"/>
        <end position="437"/>
    </location>
</feature>
<feature type="compositionally biased region" description="Acidic residues" evidence="4">
    <location>
        <begin position="381"/>
        <end position="413"/>
    </location>
</feature>
<feature type="compositionally biased region" description="Acidic residues" evidence="4">
    <location>
        <begin position="428"/>
        <end position="437"/>
    </location>
</feature>
<feature type="glycosylation site" description="N-linked (GlcNAc...) asparagine" evidence="3">
    <location>
        <position position="361"/>
    </location>
</feature>
<feature type="sequence variant" id="VAR_020417" description="In dbSNP:rs13412." evidence="5 8">
    <original>Q</original>
    <variation>R</variation>
    <location>
        <position position="186"/>
    </location>
</feature>